<keyword id="KW-0963">Cytoplasm</keyword>
<keyword id="KW-0238">DNA-binding</keyword>
<keyword id="KW-0479">Metal-binding</keyword>
<keyword id="KW-0496">Mitochondrion</keyword>
<keyword id="KW-0539">Nucleus</keyword>
<keyword id="KW-1185">Reference proteome</keyword>
<keyword id="KW-0678">Repressor</keyword>
<keyword id="KW-0804">Transcription</keyword>
<keyword id="KW-0805">Transcription regulation</keyword>
<keyword id="KW-0862">Zinc</keyword>
<comment type="function">
    <text evidence="1">Transcriptional inhibitor with a significantly increased number of target genes in response to oleate.</text>
</comment>
<comment type="subcellular location">
    <subcellularLocation>
        <location evidence="1">Cytoplasm</location>
    </subcellularLocation>
    <subcellularLocation>
        <location evidence="2">Nucleus</location>
    </subcellularLocation>
    <subcellularLocation>
        <location evidence="1">Mitochondrion</location>
    </subcellularLocation>
</comment>
<comment type="similarity">
    <text evidence="3">Belongs to the OAF3 family.</text>
</comment>
<gene>
    <name type="primary">OAF3</name>
    <name type="ordered locus">ACR241C</name>
</gene>
<evidence type="ECO:0000250" key="1"/>
<evidence type="ECO:0000255" key="2">
    <source>
        <dbReference type="PROSITE-ProRule" id="PRU00227"/>
    </source>
</evidence>
<evidence type="ECO:0000305" key="3"/>
<sequence length="795" mass="90678">MMPLKKRQRQTLVCSNCKRRKSRCDRGKPACGNCIRLGNRETCHYFISPSEKGGDGGDSPGESAGSNGALERWQFVRAHSCGRVDLTAGRTVVFGKRSAVYVAGVLSTDAVRYRDLYLELLSVFSHAAIKKTVSQLHAQAQVGAQEASLPNSVKRVIRMEDEGMLQESSPYILAKHKKVHQSLVDGFAQSRYEGRQQFADVEEAAKQHLVERYIFLQKVLPAFKKHVLPLIPIYDERMLCVTVEQLYDDYQKRGKFSAKNGDLITVATILLITRLVYLAIRFDKCSVVNVKYNRILELDTEPYAALAYELLPRDKLLRKVTLPQLQCLILLRFHNWCSPMDGDGESLQYSNVLMGTIYACCKEIGASWLSFKEPDKYDFAKARGSNSRFTMAFAEMEPGEVDSANESVVKLYQQIWAVVLHWDRNVSMLTGLEPIIGTSMKPAAMSSYNNWYADMISLDYLKWQLLTRINEDPSEVNLEEVKPIISEIRQRLGQFTSESELAFEQELILQLVELSILHAAFIGPTSNVSAAEHRKNYQELLERIIHLSGIFITYFHDPPTTNHQYGRFYTNKIVEVAMYRVYQILTGLILRISSACQDQSLKPTLMKFYKNLCSLYFNELGYDYYQVFKRLFEAKVKYKILEQTANPVFIMLRYLFAEIQSGNMESMKSQELIGLIYGEYKKMGGELNLDMMDLWNHIVPTQCDHNIGLNSLFTTEIFPTDQYSDYNLFVSFYDYASNKLTEDTNQAAEKSIAHNPSTSIHDLCKGGASPHFDLLEGILDPLDFMTYLDSIPGET</sequence>
<reference key="1">
    <citation type="journal article" date="2004" name="Science">
        <title>The Ashbya gossypii genome as a tool for mapping the ancient Saccharomyces cerevisiae genome.</title>
        <authorList>
            <person name="Dietrich F.S."/>
            <person name="Voegeli S."/>
            <person name="Brachat S."/>
            <person name="Lerch A."/>
            <person name="Gates K."/>
            <person name="Steiner S."/>
            <person name="Mohr C."/>
            <person name="Poehlmann R."/>
            <person name="Luedi P."/>
            <person name="Choi S."/>
            <person name="Wing R.A."/>
            <person name="Flavier A."/>
            <person name="Gaffney T.D."/>
            <person name="Philippsen P."/>
        </authorList>
    </citation>
    <scope>NUCLEOTIDE SEQUENCE [LARGE SCALE GENOMIC DNA]</scope>
    <source>
        <strain>ATCC 10895 / CBS 109.51 / FGSC 9923 / NRRL Y-1056</strain>
    </source>
</reference>
<reference key="2">
    <citation type="journal article" date="2013" name="G3 (Bethesda)">
        <title>Genomes of Ashbya fungi isolated from insects reveal four mating-type loci, numerous translocations, lack of transposons, and distinct gene duplications.</title>
        <authorList>
            <person name="Dietrich F.S."/>
            <person name="Voegeli S."/>
            <person name="Kuo S."/>
            <person name="Philippsen P."/>
        </authorList>
    </citation>
    <scope>GENOME REANNOTATION</scope>
    <source>
        <strain>ATCC 10895 / CBS 109.51 / FGSC 9923 / NRRL Y-1056</strain>
    </source>
</reference>
<feature type="chain" id="PRO_0000409037" description="Oleate activated transcription factor 3">
    <location>
        <begin position="1"/>
        <end position="795"/>
    </location>
</feature>
<feature type="DNA-binding region" description="Zn(2)-C6 fungal-type" evidence="2">
    <location>
        <begin position="14"/>
        <end position="43"/>
    </location>
</feature>
<name>OAF3_EREGS</name>
<organism>
    <name type="scientific">Eremothecium gossypii (strain ATCC 10895 / CBS 109.51 / FGSC 9923 / NRRL Y-1056)</name>
    <name type="common">Yeast</name>
    <name type="synonym">Ashbya gossypii</name>
    <dbReference type="NCBI Taxonomy" id="284811"/>
    <lineage>
        <taxon>Eukaryota</taxon>
        <taxon>Fungi</taxon>
        <taxon>Dikarya</taxon>
        <taxon>Ascomycota</taxon>
        <taxon>Saccharomycotina</taxon>
        <taxon>Saccharomycetes</taxon>
        <taxon>Saccharomycetales</taxon>
        <taxon>Saccharomycetaceae</taxon>
        <taxon>Eremothecium</taxon>
    </lineage>
</organism>
<dbReference type="EMBL" id="AE016816">
    <property type="protein sequence ID" value="AAS51467.2"/>
    <property type="molecule type" value="Genomic_DNA"/>
</dbReference>
<dbReference type="RefSeq" id="NP_983643.2">
    <property type="nucleotide sequence ID" value="NM_208996.2"/>
</dbReference>
<dbReference type="SMR" id="Q75BN0"/>
<dbReference type="FunCoup" id="Q75BN0">
    <property type="interactions" value="195"/>
</dbReference>
<dbReference type="STRING" id="284811.Q75BN0"/>
<dbReference type="EnsemblFungi" id="AAS51467">
    <property type="protein sequence ID" value="AAS51467"/>
    <property type="gene ID" value="AGOS_ACR241C"/>
</dbReference>
<dbReference type="GeneID" id="4619775"/>
<dbReference type="KEGG" id="ago:AGOS_ACR241C"/>
<dbReference type="eggNOG" id="ENOG502QQCV">
    <property type="taxonomic scope" value="Eukaryota"/>
</dbReference>
<dbReference type="HOGENOM" id="CLU_018684_0_0_1"/>
<dbReference type="InParanoid" id="Q75BN0"/>
<dbReference type="OMA" id="WCAPEDG"/>
<dbReference type="OrthoDB" id="2406834at2759"/>
<dbReference type="Proteomes" id="UP000000591">
    <property type="component" value="Chromosome III"/>
</dbReference>
<dbReference type="GO" id="GO:0005739">
    <property type="term" value="C:mitochondrion"/>
    <property type="evidence" value="ECO:0007669"/>
    <property type="project" value="UniProtKB-SubCell"/>
</dbReference>
<dbReference type="GO" id="GO:0005634">
    <property type="term" value="C:nucleus"/>
    <property type="evidence" value="ECO:0000318"/>
    <property type="project" value="GO_Central"/>
</dbReference>
<dbReference type="GO" id="GO:0003677">
    <property type="term" value="F:DNA binding"/>
    <property type="evidence" value="ECO:0007669"/>
    <property type="project" value="UniProtKB-KW"/>
</dbReference>
<dbReference type="GO" id="GO:0000981">
    <property type="term" value="F:DNA-binding transcription factor activity, RNA polymerase II-specific"/>
    <property type="evidence" value="ECO:0000318"/>
    <property type="project" value="GO_Central"/>
</dbReference>
<dbReference type="GO" id="GO:0008270">
    <property type="term" value="F:zinc ion binding"/>
    <property type="evidence" value="ECO:0007669"/>
    <property type="project" value="InterPro"/>
</dbReference>
<dbReference type="GO" id="GO:0045944">
    <property type="term" value="P:positive regulation of transcription by RNA polymerase II"/>
    <property type="evidence" value="ECO:0000318"/>
    <property type="project" value="GO_Central"/>
</dbReference>
<dbReference type="CDD" id="cd12148">
    <property type="entry name" value="fungal_TF_MHR"/>
    <property type="match status" value="1"/>
</dbReference>
<dbReference type="CDD" id="cd00067">
    <property type="entry name" value="GAL4"/>
    <property type="match status" value="1"/>
</dbReference>
<dbReference type="Gene3D" id="4.10.240.10">
    <property type="entry name" value="Zn(2)-C6 fungal-type DNA-binding domain"/>
    <property type="match status" value="1"/>
</dbReference>
<dbReference type="InterPro" id="IPR050675">
    <property type="entry name" value="OAF3"/>
</dbReference>
<dbReference type="InterPro" id="IPR036864">
    <property type="entry name" value="Zn2-C6_fun-type_DNA-bd_sf"/>
</dbReference>
<dbReference type="InterPro" id="IPR001138">
    <property type="entry name" value="Zn2Cys6_DnaBD"/>
</dbReference>
<dbReference type="PANTHER" id="PTHR31069:SF33">
    <property type="entry name" value="OLEATE ACTIVATED TRANSCRIPTION FACTOR 3"/>
    <property type="match status" value="1"/>
</dbReference>
<dbReference type="PANTHER" id="PTHR31069">
    <property type="entry name" value="OLEATE-ACTIVATED TRANSCRIPTION FACTOR 1-RELATED"/>
    <property type="match status" value="1"/>
</dbReference>
<dbReference type="Pfam" id="PF00172">
    <property type="entry name" value="Zn_clus"/>
    <property type="match status" value="1"/>
</dbReference>
<dbReference type="SMART" id="SM00066">
    <property type="entry name" value="GAL4"/>
    <property type="match status" value="1"/>
</dbReference>
<dbReference type="SUPFAM" id="SSF57701">
    <property type="entry name" value="Zn2/Cys6 DNA-binding domain"/>
    <property type="match status" value="1"/>
</dbReference>
<dbReference type="PROSITE" id="PS00463">
    <property type="entry name" value="ZN2_CY6_FUNGAL_1"/>
    <property type="match status" value="1"/>
</dbReference>
<dbReference type="PROSITE" id="PS50048">
    <property type="entry name" value="ZN2_CY6_FUNGAL_2"/>
    <property type="match status" value="1"/>
</dbReference>
<accession>Q75BN0</accession>
<proteinExistence type="inferred from homology"/>
<protein>
    <recommendedName>
        <fullName>Oleate activated transcription factor 3</fullName>
    </recommendedName>
</protein>